<keyword id="KW-0025">Alternative splicing</keyword>
<keyword id="KW-1048">Host nucleus</keyword>
<keyword id="KW-0945">Host-virus interaction</keyword>
<keyword id="KW-0813">Transport</keyword>
<keyword id="KW-0946">Virion</keyword>
<feature type="chain" id="PRO_0000079018" description="Nuclear export protein">
    <location>
        <begin position="1"/>
        <end position="182"/>
    </location>
</feature>
<feature type="short sequence motif" description="Nuclear export signal" evidence="1">
    <location>
        <begin position="96"/>
        <end position="105"/>
    </location>
</feature>
<feature type="short sequence motif" description="Nuclear export signal" evidence="1">
    <location>
        <begin position="122"/>
        <end position="132"/>
    </location>
</feature>
<feature type="mutagenesis site" description="90% loss of nuclear export; when associated with A-103 and A-105." evidence="2">
    <original>M</original>
    <variation>A</variation>
    <location>
        <position position="100"/>
    </location>
</feature>
<feature type="mutagenesis site" description="90% loss of nuclear export; when associated with A-100 and A-105." evidence="2">
    <original>L</original>
    <variation>A</variation>
    <location>
        <position position="103"/>
    </location>
</feature>
<feature type="mutagenesis site" description="90% loss of nuclear export; when associated with A-100 and A-103." evidence="2">
    <original>L</original>
    <variation>A</variation>
    <location>
        <position position="105"/>
    </location>
</feature>
<feature type="mutagenesis site" description="90% loss of nuclear export; when associated with A-130 and A-132." evidence="2">
    <original>L</original>
    <variation>A</variation>
    <location>
        <position position="127"/>
    </location>
</feature>
<feature type="mutagenesis site" description="90% loss of nuclear export; when associated with A-127 and A-132." evidence="2">
    <original>L</original>
    <variation>A</variation>
    <location>
        <position position="130"/>
    </location>
</feature>
<feature type="mutagenesis site" description="90% loss of nuclear export; when associated with A-127 and A-130." evidence="2">
    <original>L</original>
    <variation>A</variation>
    <location>
        <position position="132"/>
    </location>
</feature>
<name>NEP_INCCA</name>
<organismHost>
    <name type="scientific">Homo sapiens</name>
    <name type="common">Human</name>
    <dbReference type="NCBI Taxonomy" id="9606"/>
</organismHost>
<organismHost>
    <name type="scientific">Sus scrofa</name>
    <name type="common">Pig</name>
    <dbReference type="NCBI Taxonomy" id="9823"/>
</organismHost>
<gene>
    <name evidence="1" type="primary">NS</name>
</gene>
<dbReference type="EMBL" id="M10087">
    <property type="status" value="NOT_ANNOTATED_CDS"/>
    <property type="molecule type" value="Genomic_RNA"/>
</dbReference>
<dbReference type="EMBL" id="AB099625">
    <property type="protein sequence ID" value="BAD37132.1"/>
    <property type="molecule type" value="Genomic_RNA"/>
</dbReference>
<dbReference type="PIR" id="S28883">
    <property type="entry name" value="S28883"/>
</dbReference>
<dbReference type="SMR" id="P33493"/>
<dbReference type="GO" id="GO:0042025">
    <property type="term" value="C:host cell nucleus"/>
    <property type="evidence" value="ECO:0007669"/>
    <property type="project" value="UniProtKB-SubCell"/>
</dbReference>
<dbReference type="GO" id="GO:0044423">
    <property type="term" value="C:virion component"/>
    <property type="evidence" value="ECO:0007669"/>
    <property type="project" value="UniProtKB-UniRule"/>
</dbReference>
<dbReference type="GO" id="GO:0039675">
    <property type="term" value="P:exit of virus from host cell nucleus through nuclear pore"/>
    <property type="evidence" value="ECO:0007669"/>
    <property type="project" value="UniProtKB-UniRule"/>
</dbReference>
<dbReference type="HAMAP" id="MF_04067">
    <property type="entry name" value="INFV_NEP"/>
    <property type="match status" value="1"/>
</dbReference>
<dbReference type="InterPro" id="IPR005188">
    <property type="entry name" value="Flu_C_NS2"/>
</dbReference>
<dbReference type="InterPro" id="IPR000968">
    <property type="entry name" value="Flu_NS2"/>
</dbReference>
<dbReference type="Pfam" id="PF03555">
    <property type="entry name" value="Flu_C_NS2"/>
    <property type="match status" value="1"/>
</dbReference>
<reference key="1">
    <citation type="journal article" date="1985" name="J. Virol.">
        <title>Influenza C virus RNA 7 codes for a nonstructural protein.</title>
        <authorList>
            <person name="Nakada S."/>
            <person name="Graves P.N."/>
            <person name="Desselberger U."/>
            <person name="Creager R.S."/>
            <person name="Krystal M."/>
            <person name="Palese P."/>
        </authorList>
    </citation>
    <scope>NUCLEOTIDE SEQUENCE [GENOMIC RNA]</scope>
</reference>
<reference key="2">
    <citation type="journal article" date="2004" name="Epidemiol. Infect.">
        <title>Characterization of antigenically and genetically similar influenza C viruses isolated in Japan during the 1999-2000 season.</title>
        <authorList>
            <person name="Matsuzaki Y."/>
            <person name="Takao S."/>
            <person name="Shimada S."/>
            <person name="Mizuta K."/>
            <person name="Sugawara K."/>
            <person name="Takashita E."/>
            <person name="Muraki Y."/>
            <person name="Hongo S."/>
            <person name="Nishimura H."/>
        </authorList>
    </citation>
    <scope>NUCLEOTIDE SEQUENCE [GENOMIC RNA]</scope>
</reference>
<reference key="3">
    <citation type="journal article" date="1986" name="Virus Res.">
        <title>The influenza C virus NS gene: evidence for a spliced mRNA and a second NS gene product (NS2 protein).</title>
        <authorList>
            <person name="Nakada S."/>
            <person name="Graves P.N."/>
            <person name="Palese P."/>
        </authorList>
    </citation>
    <scope>IDENTIFICATION</scope>
</reference>
<reference key="4">
    <citation type="journal article" date="2001" name="J. Virol.">
        <title>Influenza B and C virus NEP (NS2) proteins possess nuclear export activities.</title>
        <authorList>
            <person name="Paragas J."/>
            <person name="Talon J."/>
            <person name="O'Neill R.E."/>
            <person name="Anderson D.K."/>
            <person name="Garcia-Sastre A."/>
            <person name="Palese P."/>
        </authorList>
    </citation>
    <scope>INTERACTION WITH HUMAN XPO1/CRM1</scope>
    <scope>NUCLEAR EXPORT SIGNALS</scope>
    <scope>MUTAGENESIS OF MET-100; LEU-103; LEU-105; LEU-127; LEU-130 AND LEU-132</scope>
</reference>
<sequence>MSDKTVKSTNLMAFVATKMLERQEDLDTCTEMQVEKMKTSTKARLRTESSFAPRTWEDAIKDEILRRSVDTSSLNKWPELKQELENVSDALKADSLWLPMKSLSLYSRVSNQEPSSIPIGEMKHQILTRLKLICSRLEKLDLNLSKAVLGIQNSEDLILIIYNRDICKNTILMIKSLCNSLI</sequence>
<proteinExistence type="evidence at protein level"/>
<protein>
    <recommendedName>
        <fullName evidence="1">Nuclear export protein</fullName>
        <shortName evidence="1">NEP</shortName>
    </recommendedName>
    <alternativeName>
        <fullName evidence="1">Non-structural protein 2</fullName>
        <shortName evidence="1">NS2</shortName>
    </alternativeName>
</protein>
<evidence type="ECO:0000255" key="1">
    <source>
        <dbReference type="HAMAP-Rule" id="MF_04067"/>
    </source>
</evidence>
<evidence type="ECO:0000269" key="2">
    <source>
    </source>
</evidence>
<comment type="function">
    <text evidence="1">Mediates the nuclear export of encapsidated genomic RNAs (ribonucleoproteins, RNPs). Acts as an adapter between viral RNPs complexes and the nuclear export machinery of the cell. Possesses no intrinsic RNA-binding activity, but includes a C-terminal M1-binding domain. This domain is believed to allow recognition of RNPs bound to the protein M1. Since protein M1 is not available in large quantities before late stages of infection, such an indirect recognition mechanism probably ensures that genomic RNPs are not exported from the host nucleus until sufficient quantities of viral mRNA and progeny genomic RNA have been synthesized. Furthermore, the RNPs enter the host cytoplasm only when associated with the M1 protein that is necessary to guide them to the plasma membrane. May down-regulate viral RNA synthesis when overproduced.</text>
</comment>
<comment type="subunit">
    <text evidence="1">Interacts with protein M1. May interact with host nucleoporin RAB/HRB and exportin XPO1/CRM1.</text>
</comment>
<comment type="subcellular location">
    <subcellularLocation>
        <location evidence="1">Virion</location>
    </subcellularLocation>
    <subcellularLocation>
        <location evidence="1">Host nucleus</location>
    </subcellularLocation>
</comment>
<comment type="alternative products">
    <event type="alternative splicing"/>
    <isoform>
        <id>P33493-1</id>
        <name>NEP</name>
        <name>NS2</name>
        <sequence type="displayed"/>
    </isoform>
    <isoform>
        <id>P06944-1</id>
        <name>NS1</name>
        <sequence type="external"/>
    </isoform>
</comment>
<comment type="similarity">
    <text evidence="1">Belongs to the influenza viruses NEP family.</text>
</comment>
<accession>P33493</accession>
<accession>Q68BV5</accession>
<organism>
    <name type="scientific">Influenza C virus (strain C/California/1978)</name>
    <dbReference type="NCBI Taxonomy" id="203224"/>
    <lineage>
        <taxon>Viruses</taxon>
        <taxon>Riboviria</taxon>
        <taxon>Orthornavirae</taxon>
        <taxon>Negarnaviricota</taxon>
        <taxon>Polyploviricotina</taxon>
        <taxon>Insthoviricetes</taxon>
        <taxon>Articulavirales</taxon>
        <taxon>Orthomyxoviridae</taxon>
        <taxon>Gammainfluenzavirus</taxon>
        <taxon>Gammainfluenzavirus influenzae</taxon>
        <taxon>Influenza C virus</taxon>
    </lineage>
</organism>